<comment type="function">
    <text evidence="1">Carrier of the growing fatty acid chain in fatty acid biosynthesis.</text>
</comment>
<comment type="pathway">
    <text evidence="1">Lipid metabolism; fatty acid biosynthesis.</text>
</comment>
<comment type="subcellular location">
    <subcellularLocation>
        <location evidence="1">Cytoplasm</location>
    </subcellularLocation>
</comment>
<comment type="PTM">
    <text evidence="1">4'-phosphopantetheine is transferred from CoA to a specific serine of apo-ACP by AcpS. This modification is essential for activity because fatty acids are bound in thioester linkage to the sulfhydryl of the prosthetic group.</text>
</comment>
<comment type="similarity">
    <text evidence="1">Belongs to the acyl carrier protein (ACP) family.</text>
</comment>
<organism>
    <name type="scientific">Staphylococcus saprophyticus subsp. saprophyticus (strain ATCC 15305 / DSM 20229 / NCIMB 8711 / NCTC 7292 / S-41)</name>
    <dbReference type="NCBI Taxonomy" id="342451"/>
    <lineage>
        <taxon>Bacteria</taxon>
        <taxon>Bacillati</taxon>
        <taxon>Bacillota</taxon>
        <taxon>Bacilli</taxon>
        <taxon>Bacillales</taxon>
        <taxon>Staphylococcaceae</taxon>
        <taxon>Staphylococcus</taxon>
    </lineage>
</organism>
<protein>
    <recommendedName>
        <fullName evidence="1">Acyl carrier protein</fullName>
        <shortName evidence="1">ACP</shortName>
    </recommendedName>
</protein>
<reference key="1">
    <citation type="journal article" date="2005" name="Proc. Natl. Acad. Sci. U.S.A.">
        <title>Whole genome sequence of Staphylococcus saprophyticus reveals the pathogenesis of uncomplicated urinary tract infection.</title>
        <authorList>
            <person name="Kuroda M."/>
            <person name="Yamashita A."/>
            <person name="Hirakawa H."/>
            <person name="Kumano M."/>
            <person name="Morikawa K."/>
            <person name="Higashide M."/>
            <person name="Maruyama A."/>
            <person name="Inose Y."/>
            <person name="Matoba K."/>
            <person name="Toh H."/>
            <person name="Kuhara S."/>
            <person name="Hattori M."/>
            <person name="Ohta T."/>
        </authorList>
    </citation>
    <scope>NUCLEOTIDE SEQUENCE [LARGE SCALE GENOMIC DNA]</scope>
    <source>
        <strain>ATCC 15305 / DSM 20229 / NCIMB 8711 / NCTC 7292 / S-41</strain>
    </source>
</reference>
<evidence type="ECO:0000255" key="1">
    <source>
        <dbReference type="HAMAP-Rule" id="MF_01217"/>
    </source>
</evidence>
<evidence type="ECO:0000255" key="2">
    <source>
        <dbReference type="PROSITE-ProRule" id="PRU00258"/>
    </source>
</evidence>
<proteinExistence type="inferred from homology"/>
<name>ACP_STAS1</name>
<accession>Q49X16</accession>
<keyword id="KW-0963">Cytoplasm</keyword>
<keyword id="KW-0275">Fatty acid biosynthesis</keyword>
<keyword id="KW-0276">Fatty acid metabolism</keyword>
<keyword id="KW-0444">Lipid biosynthesis</keyword>
<keyword id="KW-0443">Lipid metabolism</keyword>
<keyword id="KW-0596">Phosphopantetheine</keyword>
<keyword id="KW-0597">Phosphoprotein</keyword>
<keyword id="KW-1185">Reference proteome</keyword>
<dbReference type="EMBL" id="AP008934">
    <property type="protein sequence ID" value="BAE18682.1"/>
    <property type="molecule type" value="Genomic_DNA"/>
</dbReference>
<dbReference type="RefSeq" id="WP_002483492.1">
    <property type="nucleotide sequence ID" value="NZ_MTGA01000034.1"/>
</dbReference>
<dbReference type="SMR" id="Q49X16"/>
<dbReference type="KEGG" id="ssp:SSP1537"/>
<dbReference type="eggNOG" id="COG0236">
    <property type="taxonomic scope" value="Bacteria"/>
</dbReference>
<dbReference type="HOGENOM" id="CLU_108696_5_1_9"/>
<dbReference type="OrthoDB" id="9804551at2"/>
<dbReference type="UniPathway" id="UPA00094"/>
<dbReference type="Proteomes" id="UP000006371">
    <property type="component" value="Chromosome"/>
</dbReference>
<dbReference type="GO" id="GO:0005829">
    <property type="term" value="C:cytosol"/>
    <property type="evidence" value="ECO:0007669"/>
    <property type="project" value="TreeGrafter"/>
</dbReference>
<dbReference type="GO" id="GO:0016020">
    <property type="term" value="C:membrane"/>
    <property type="evidence" value="ECO:0007669"/>
    <property type="project" value="GOC"/>
</dbReference>
<dbReference type="GO" id="GO:0000035">
    <property type="term" value="F:acyl binding"/>
    <property type="evidence" value="ECO:0007669"/>
    <property type="project" value="TreeGrafter"/>
</dbReference>
<dbReference type="GO" id="GO:0000036">
    <property type="term" value="F:acyl carrier activity"/>
    <property type="evidence" value="ECO:0007669"/>
    <property type="project" value="UniProtKB-UniRule"/>
</dbReference>
<dbReference type="GO" id="GO:0009245">
    <property type="term" value="P:lipid A biosynthetic process"/>
    <property type="evidence" value="ECO:0007669"/>
    <property type="project" value="TreeGrafter"/>
</dbReference>
<dbReference type="FunFam" id="1.10.1200.10:FF:000001">
    <property type="entry name" value="Acyl carrier protein"/>
    <property type="match status" value="1"/>
</dbReference>
<dbReference type="Gene3D" id="1.10.1200.10">
    <property type="entry name" value="ACP-like"/>
    <property type="match status" value="1"/>
</dbReference>
<dbReference type="HAMAP" id="MF_01217">
    <property type="entry name" value="Acyl_carrier"/>
    <property type="match status" value="1"/>
</dbReference>
<dbReference type="InterPro" id="IPR003231">
    <property type="entry name" value="ACP"/>
</dbReference>
<dbReference type="InterPro" id="IPR036736">
    <property type="entry name" value="ACP-like_sf"/>
</dbReference>
<dbReference type="InterPro" id="IPR009081">
    <property type="entry name" value="PP-bd_ACP"/>
</dbReference>
<dbReference type="InterPro" id="IPR006162">
    <property type="entry name" value="Ppantetheine_attach_site"/>
</dbReference>
<dbReference type="NCBIfam" id="TIGR00517">
    <property type="entry name" value="acyl_carrier"/>
    <property type="match status" value="1"/>
</dbReference>
<dbReference type="NCBIfam" id="NF002148">
    <property type="entry name" value="PRK00982.1-2"/>
    <property type="match status" value="1"/>
</dbReference>
<dbReference type="NCBIfam" id="NF002150">
    <property type="entry name" value="PRK00982.1-4"/>
    <property type="match status" value="1"/>
</dbReference>
<dbReference type="NCBIfam" id="NF002151">
    <property type="entry name" value="PRK00982.1-5"/>
    <property type="match status" value="1"/>
</dbReference>
<dbReference type="PANTHER" id="PTHR20863">
    <property type="entry name" value="ACYL CARRIER PROTEIN"/>
    <property type="match status" value="1"/>
</dbReference>
<dbReference type="PANTHER" id="PTHR20863:SF76">
    <property type="entry name" value="CARRIER DOMAIN-CONTAINING PROTEIN"/>
    <property type="match status" value="1"/>
</dbReference>
<dbReference type="Pfam" id="PF00550">
    <property type="entry name" value="PP-binding"/>
    <property type="match status" value="1"/>
</dbReference>
<dbReference type="SUPFAM" id="SSF47336">
    <property type="entry name" value="ACP-like"/>
    <property type="match status" value="1"/>
</dbReference>
<dbReference type="PROSITE" id="PS50075">
    <property type="entry name" value="CARRIER"/>
    <property type="match status" value="1"/>
</dbReference>
<dbReference type="PROSITE" id="PS00012">
    <property type="entry name" value="PHOSPHOPANTETHEINE"/>
    <property type="match status" value="1"/>
</dbReference>
<feature type="chain" id="PRO_0000180197" description="Acyl carrier protein">
    <location>
        <begin position="1"/>
        <end position="77"/>
    </location>
</feature>
<feature type="domain" description="Carrier" evidence="2">
    <location>
        <begin position="1"/>
        <end position="76"/>
    </location>
</feature>
<feature type="modified residue" description="O-(pantetheine 4'-phosphoryl)serine" evidence="2">
    <location>
        <position position="36"/>
    </location>
</feature>
<gene>
    <name evidence="1" type="primary">acpP</name>
    <name type="ordered locus">SSP1537</name>
</gene>
<sequence length="77" mass="8563">MENFDKVKDIIVDRLGVDAEKVTEDASFKDDLGADSLDIAELVMELEDEFGTEIPDEEAEKINTVGDAVKFINSIEK</sequence>